<protein>
    <recommendedName>
        <fullName evidence="1">Undecaprenyl-diphosphatase</fullName>
        <ecNumber evidence="1">3.6.1.27</ecNumber>
    </recommendedName>
    <alternativeName>
        <fullName evidence="1">Bacitracin resistance protein</fullName>
    </alternativeName>
    <alternativeName>
        <fullName evidence="1">Undecaprenyl pyrophosphate phosphatase</fullName>
    </alternativeName>
</protein>
<evidence type="ECO:0000255" key="1">
    <source>
        <dbReference type="HAMAP-Rule" id="MF_01006"/>
    </source>
</evidence>
<gene>
    <name evidence="1" type="primary">uppP</name>
    <name type="synonym">bacA</name>
    <name type="ordered locus">SBO_2913</name>
</gene>
<dbReference type="EC" id="3.6.1.27" evidence="1"/>
<dbReference type="EMBL" id="CP000036">
    <property type="protein sequence ID" value="ABB67430.1"/>
    <property type="molecule type" value="Genomic_DNA"/>
</dbReference>
<dbReference type="RefSeq" id="WP_001305111.1">
    <property type="nucleotide sequence ID" value="NC_007613.1"/>
</dbReference>
<dbReference type="SMR" id="Q31WX8"/>
<dbReference type="GeneID" id="86861207"/>
<dbReference type="KEGG" id="sbo:SBO_2913"/>
<dbReference type="HOGENOM" id="CLU_060296_2_0_6"/>
<dbReference type="Proteomes" id="UP000007067">
    <property type="component" value="Chromosome"/>
</dbReference>
<dbReference type="GO" id="GO:0005886">
    <property type="term" value="C:plasma membrane"/>
    <property type="evidence" value="ECO:0007669"/>
    <property type="project" value="UniProtKB-SubCell"/>
</dbReference>
<dbReference type="GO" id="GO:0050380">
    <property type="term" value="F:undecaprenyl-diphosphatase activity"/>
    <property type="evidence" value="ECO:0007669"/>
    <property type="project" value="UniProtKB-UniRule"/>
</dbReference>
<dbReference type="GO" id="GO:0071555">
    <property type="term" value="P:cell wall organization"/>
    <property type="evidence" value="ECO:0007669"/>
    <property type="project" value="UniProtKB-KW"/>
</dbReference>
<dbReference type="GO" id="GO:0009252">
    <property type="term" value="P:peptidoglycan biosynthetic process"/>
    <property type="evidence" value="ECO:0007669"/>
    <property type="project" value="UniProtKB-KW"/>
</dbReference>
<dbReference type="GO" id="GO:0008360">
    <property type="term" value="P:regulation of cell shape"/>
    <property type="evidence" value="ECO:0007669"/>
    <property type="project" value="UniProtKB-KW"/>
</dbReference>
<dbReference type="GO" id="GO:0046677">
    <property type="term" value="P:response to antibiotic"/>
    <property type="evidence" value="ECO:0007669"/>
    <property type="project" value="UniProtKB-UniRule"/>
</dbReference>
<dbReference type="HAMAP" id="MF_01006">
    <property type="entry name" value="Undec_diphosphatase"/>
    <property type="match status" value="1"/>
</dbReference>
<dbReference type="InterPro" id="IPR003824">
    <property type="entry name" value="UppP"/>
</dbReference>
<dbReference type="NCBIfam" id="NF001388">
    <property type="entry name" value="PRK00281.1-1"/>
    <property type="match status" value="1"/>
</dbReference>
<dbReference type="NCBIfam" id="NF001389">
    <property type="entry name" value="PRK00281.1-2"/>
    <property type="match status" value="1"/>
</dbReference>
<dbReference type="NCBIfam" id="NF001390">
    <property type="entry name" value="PRK00281.1-4"/>
    <property type="match status" value="1"/>
</dbReference>
<dbReference type="NCBIfam" id="TIGR00753">
    <property type="entry name" value="undec_PP_bacA"/>
    <property type="match status" value="1"/>
</dbReference>
<dbReference type="PANTHER" id="PTHR30622">
    <property type="entry name" value="UNDECAPRENYL-DIPHOSPHATASE"/>
    <property type="match status" value="1"/>
</dbReference>
<dbReference type="PANTHER" id="PTHR30622:SF3">
    <property type="entry name" value="UNDECAPRENYL-DIPHOSPHATASE"/>
    <property type="match status" value="1"/>
</dbReference>
<dbReference type="Pfam" id="PF02673">
    <property type="entry name" value="BacA"/>
    <property type="match status" value="1"/>
</dbReference>
<comment type="function">
    <text evidence="1">Catalyzes the dephosphorylation of undecaprenyl diphosphate (UPP). Confers resistance to bacitracin.</text>
</comment>
<comment type="catalytic activity">
    <reaction evidence="1">
        <text>di-trans,octa-cis-undecaprenyl diphosphate + H2O = di-trans,octa-cis-undecaprenyl phosphate + phosphate + H(+)</text>
        <dbReference type="Rhea" id="RHEA:28094"/>
        <dbReference type="ChEBI" id="CHEBI:15377"/>
        <dbReference type="ChEBI" id="CHEBI:15378"/>
        <dbReference type="ChEBI" id="CHEBI:43474"/>
        <dbReference type="ChEBI" id="CHEBI:58405"/>
        <dbReference type="ChEBI" id="CHEBI:60392"/>
        <dbReference type="EC" id="3.6.1.27"/>
    </reaction>
</comment>
<comment type="subcellular location">
    <subcellularLocation>
        <location evidence="1">Cell inner membrane</location>
        <topology evidence="1">Multi-pass membrane protein</topology>
    </subcellularLocation>
</comment>
<comment type="miscellaneous">
    <text>Bacitracin is thought to be involved in the inhibition of peptidoglycan synthesis by sequestering undecaprenyl diphosphate, thereby reducing the pool of lipid carrier available.</text>
</comment>
<comment type="similarity">
    <text evidence="1">Belongs to the UppP family.</text>
</comment>
<name>UPPP_SHIBS</name>
<feature type="chain" id="PRO_0000227637" description="Undecaprenyl-diphosphatase">
    <location>
        <begin position="1"/>
        <end position="273"/>
    </location>
</feature>
<feature type="transmembrane region" description="Helical" evidence="1">
    <location>
        <begin position="6"/>
        <end position="26"/>
    </location>
</feature>
<feature type="transmembrane region" description="Helical" evidence="1">
    <location>
        <begin position="45"/>
        <end position="65"/>
    </location>
</feature>
<feature type="transmembrane region" description="Helical" evidence="1">
    <location>
        <begin position="90"/>
        <end position="110"/>
    </location>
</feature>
<feature type="transmembrane region" description="Helical" evidence="1">
    <location>
        <begin position="116"/>
        <end position="136"/>
    </location>
</feature>
<feature type="transmembrane region" description="Helical" evidence="1">
    <location>
        <begin position="190"/>
        <end position="210"/>
    </location>
</feature>
<feature type="transmembrane region" description="Helical" evidence="1">
    <location>
        <begin position="222"/>
        <end position="242"/>
    </location>
</feature>
<feature type="transmembrane region" description="Helical" evidence="1">
    <location>
        <begin position="252"/>
        <end position="272"/>
    </location>
</feature>
<keyword id="KW-0046">Antibiotic resistance</keyword>
<keyword id="KW-0997">Cell inner membrane</keyword>
<keyword id="KW-1003">Cell membrane</keyword>
<keyword id="KW-0133">Cell shape</keyword>
<keyword id="KW-0961">Cell wall biogenesis/degradation</keyword>
<keyword id="KW-0378">Hydrolase</keyword>
<keyword id="KW-0472">Membrane</keyword>
<keyword id="KW-0573">Peptidoglycan synthesis</keyword>
<keyword id="KW-0812">Transmembrane</keyword>
<keyword id="KW-1133">Transmembrane helix</keyword>
<sequence>MSDMHSLLIAAILGVVEGLTEFLPVSSTGHMIIVGHLLGFEGDTAKTFEVVIQLGSILAVVVMFWRRLFGLIGIHFGRPLQHEGESKGRLTLIHILLGMIPAVVLGLLFHDTIKSLFNPINVMYALVVGGLLLIAAECLKPKEPRAPGLDDMTYRQAFMIGCFQCLALWPGFSRSGATISGGMLMGVSRYAASEFSFLLAVPMMMGATALDLYKSWGFLTTGDIPMFAVGFITAFVVALIAIKTFLQLIKRISFIPFAIYRFIVAAAVYVVFF</sequence>
<organism>
    <name type="scientific">Shigella boydii serotype 4 (strain Sb227)</name>
    <dbReference type="NCBI Taxonomy" id="300268"/>
    <lineage>
        <taxon>Bacteria</taxon>
        <taxon>Pseudomonadati</taxon>
        <taxon>Pseudomonadota</taxon>
        <taxon>Gammaproteobacteria</taxon>
        <taxon>Enterobacterales</taxon>
        <taxon>Enterobacteriaceae</taxon>
        <taxon>Shigella</taxon>
    </lineage>
</organism>
<proteinExistence type="inferred from homology"/>
<reference key="1">
    <citation type="journal article" date="2005" name="Nucleic Acids Res.">
        <title>Genome dynamics and diversity of Shigella species, the etiologic agents of bacillary dysentery.</title>
        <authorList>
            <person name="Yang F."/>
            <person name="Yang J."/>
            <person name="Zhang X."/>
            <person name="Chen L."/>
            <person name="Jiang Y."/>
            <person name="Yan Y."/>
            <person name="Tang X."/>
            <person name="Wang J."/>
            <person name="Xiong Z."/>
            <person name="Dong J."/>
            <person name="Xue Y."/>
            <person name="Zhu Y."/>
            <person name="Xu X."/>
            <person name="Sun L."/>
            <person name="Chen S."/>
            <person name="Nie H."/>
            <person name="Peng J."/>
            <person name="Xu J."/>
            <person name="Wang Y."/>
            <person name="Yuan Z."/>
            <person name="Wen Y."/>
            <person name="Yao Z."/>
            <person name="Shen Y."/>
            <person name="Qiang B."/>
            <person name="Hou Y."/>
            <person name="Yu J."/>
            <person name="Jin Q."/>
        </authorList>
    </citation>
    <scope>NUCLEOTIDE SEQUENCE [LARGE SCALE GENOMIC DNA]</scope>
    <source>
        <strain>Sb227</strain>
    </source>
</reference>
<accession>Q31WX8</accession>